<keyword id="KW-0240">DNA-directed RNA polymerase</keyword>
<keyword id="KW-0460">Magnesium</keyword>
<keyword id="KW-0479">Metal-binding</keyword>
<keyword id="KW-0548">Nucleotidyltransferase</keyword>
<keyword id="KW-1185">Reference proteome</keyword>
<keyword id="KW-0804">Transcription</keyword>
<keyword id="KW-0808">Transferase</keyword>
<keyword id="KW-0862">Zinc</keyword>
<proteinExistence type="inferred from homology"/>
<comment type="function">
    <text evidence="1">DNA-dependent RNA polymerase catalyzes the transcription of DNA into RNA using the four ribonucleoside triphosphates as substrates.</text>
</comment>
<comment type="catalytic activity">
    <reaction evidence="1">
        <text>RNA(n) + a ribonucleoside 5'-triphosphate = RNA(n+1) + diphosphate</text>
        <dbReference type="Rhea" id="RHEA:21248"/>
        <dbReference type="Rhea" id="RHEA-COMP:14527"/>
        <dbReference type="Rhea" id="RHEA-COMP:17342"/>
        <dbReference type="ChEBI" id="CHEBI:33019"/>
        <dbReference type="ChEBI" id="CHEBI:61557"/>
        <dbReference type="ChEBI" id="CHEBI:140395"/>
        <dbReference type="EC" id="2.7.7.6"/>
    </reaction>
</comment>
<comment type="cofactor">
    <cofactor evidence="1">
        <name>Mg(2+)</name>
        <dbReference type="ChEBI" id="CHEBI:18420"/>
    </cofactor>
    <text evidence="1">Binds 1 Mg(2+) ion per subunit.</text>
</comment>
<comment type="cofactor">
    <cofactor evidence="1">
        <name>Zn(2+)</name>
        <dbReference type="ChEBI" id="CHEBI:29105"/>
    </cofactor>
    <text evidence="1">Binds 2 Zn(2+) ions per subunit.</text>
</comment>
<comment type="subunit">
    <text evidence="1">The RNAP catalytic core consists of 2 alpha, 1 beta, 1 beta' and 1 omega subunit. When a sigma factor is associated with the core the holoenzyme is formed, which can initiate transcription.</text>
</comment>
<comment type="similarity">
    <text evidence="1">Belongs to the RNA polymerase beta' chain family.</text>
</comment>
<dbReference type="EC" id="2.7.7.6" evidence="1"/>
<dbReference type="EMBL" id="CP000267">
    <property type="protein sequence ID" value="ABD71295.1"/>
    <property type="molecule type" value="Genomic_DNA"/>
</dbReference>
<dbReference type="RefSeq" id="WP_011465858.1">
    <property type="nucleotide sequence ID" value="NC_007908.1"/>
</dbReference>
<dbReference type="SMR" id="Q21SF8"/>
<dbReference type="STRING" id="338969.Rfer_3591"/>
<dbReference type="KEGG" id="rfr:Rfer_3591"/>
<dbReference type="eggNOG" id="COG0086">
    <property type="taxonomic scope" value="Bacteria"/>
</dbReference>
<dbReference type="HOGENOM" id="CLU_000524_3_1_4"/>
<dbReference type="OrthoDB" id="9815296at2"/>
<dbReference type="Proteomes" id="UP000008332">
    <property type="component" value="Chromosome"/>
</dbReference>
<dbReference type="GO" id="GO:0000428">
    <property type="term" value="C:DNA-directed RNA polymerase complex"/>
    <property type="evidence" value="ECO:0007669"/>
    <property type="project" value="UniProtKB-KW"/>
</dbReference>
<dbReference type="GO" id="GO:0003677">
    <property type="term" value="F:DNA binding"/>
    <property type="evidence" value="ECO:0007669"/>
    <property type="project" value="UniProtKB-UniRule"/>
</dbReference>
<dbReference type="GO" id="GO:0003899">
    <property type="term" value="F:DNA-directed RNA polymerase activity"/>
    <property type="evidence" value="ECO:0007669"/>
    <property type="project" value="UniProtKB-UniRule"/>
</dbReference>
<dbReference type="GO" id="GO:0000287">
    <property type="term" value="F:magnesium ion binding"/>
    <property type="evidence" value="ECO:0007669"/>
    <property type="project" value="UniProtKB-UniRule"/>
</dbReference>
<dbReference type="GO" id="GO:0008270">
    <property type="term" value="F:zinc ion binding"/>
    <property type="evidence" value="ECO:0007669"/>
    <property type="project" value="UniProtKB-UniRule"/>
</dbReference>
<dbReference type="GO" id="GO:0006351">
    <property type="term" value="P:DNA-templated transcription"/>
    <property type="evidence" value="ECO:0007669"/>
    <property type="project" value="UniProtKB-UniRule"/>
</dbReference>
<dbReference type="CDD" id="cd02655">
    <property type="entry name" value="RNAP_beta'_C"/>
    <property type="match status" value="1"/>
</dbReference>
<dbReference type="CDD" id="cd01609">
    <property type="entry name" value="RNAP_beta'_N"/>
    <property type="match status" value="1"/>
</dbReference>
<dbReference type="FunFam" id="1.10.132.30:FF:000003">
    <property type="entry name" value="DNA-directed RNA polymerase subunit beta"/>
    <property type="match status" value="1"/>
</dbReference>
<dbReference type="FunFam" id="1.10.150.390:FF:000002">
    <property type="entry name" value="DNA-directed RNA polymerase subunit beta"/>
    <property type="match status" value="1"/>
</dbReference>
<dbReference type="FunFam" id="4.10.860.120:FF:000001">
    <property type="entry name" value="DNA-directed RNA polymerase subunit beta"/>
    <property type="match status" value="1"/>
</dbReference>
<dbReference type="Gene3D" id="1.10.132.30">
    <property type="match status" value="1"/>
</dbReference>
<dbReference type="Gene3D" id="1.10.150.390">
    <property type="match status" value="1"/>
</dbReference>
<dbReference type="Gene3D" id="1.10.1790.20">
    <property type="match status" value="1"/>
</dbReference>
<dbReference type="Gene3D" id="1.10.40.90">
    <property type="match status" value="1"/>
</dbReference>
<dbReference type="Gene3D" id="2.40.40.20">
    <property type="match status" value="1"/>
</dbReference>
<dbReference type="Gene3D" id="2.40.50.100">
    <property type="match status" value="3"/>
</dbReference>
<dbReference type="Gene3D" id="4.10.860.120">
    <property type="entry name" value="RNA polymerase II, clamp domain"/>
    <property type="match status" value="1"/>
</dbReference>
<dbReference type="Gene3D" id="1.10.274.100">
    <property type="entry name" value="RNA polymerase Rpb1, domain 3"/>
    <property type="match status" value="1"/>
</dbReference>
<dbReference type="HAMAP" id="MF_01322">
    <property type="entry name" value="RNApol_bact_RpoC"/>
    <property type="match status" value="1"/>
</dbReference>
<dbReference type="InterPro" id="IPR045867">
    <property type="entry name" value="DNA-dir_RpoC_beta_prime"/>
</dbReference>
<dbReference type="InterPro" id="IPR012754">
    <property type="entry name" value="DNA-dir_RpoC_beta_prime_bact"/>
</dbReference>
<dbReference type="InterPro" id="IPR000722">
    <property type="entry name" value="RNA_pol_asu"/>
</dbReference>
<dbReference type="InterPro" id="IPR006592">
    <property type="entry name" value="RNA_pol_N"/>
</dbReference>
<dbReference type="InterPro" id="IPR007080">
    <property type="entry name" value="RNA_pol_Rpb1_1"/>
</dbReference>
<dbReference type="InterPro" id="IPR007066">
    <property type="entry name" value="RNA_pol_Rpb1_3"/>
</dbReference>
<dbReference type="InterPro" id="IPR042102">
    <property type="entry name" value="RNA_pol_Rpb1_3_sf"/>
</dbReference>
<dbReference type="InterPro" id="IPR007083">
    <property type="entry name" value="RNA_pol_Rpb1_4"/>
</dbReference>
<dbReference type="InterPro" id="IPR007081">
    <property type="entry name" value="RNA_pol_Rpb1_5"/>
</dbReference>
<dbReference type="InterPro" id="IPR044893">
    <property type="entry name" value="RNA_pol_Rpb1_clamp_domain"/>
</dbReference>
<dbReference type="InterPro" id="IPR038120">
    <property type="entry name" value="Rpb1_funnel_sf"/>
</dbReference>
<dbReference type="NCBIfam" id="TIGR02386">
    <property type="entry name" value="rpoC_TIGR"/>
    <property type="match status" value="1"/>
</dbReference>
<dbReference type="PANTHER" id="PTHR19376">
    <property type="entry name" value="DNA-DIRECTED RNA POLYMERASE"/>
    <property type="match status" value="1"/>
</dbReference>
<dbReference type="PANTHER" id="PTHR19376:SF54">
    <property type="entry name" value="DNA-DIRECTED RNA POLYMERASE SUBUNIT BETA"/>
    <property type="match status" value="1"/>
</dbReference>
<dbReference type="Pfam" id="PF04997">
    <property type="entry name" value="RNA_pol_Rpb1_1"/>
    <property type="match status" value="1"/>
</dbReference>
<dbReference type="Pfam" id="PF00623">
    <property type="entry name" value="RNA_pol_Rpb1_2"/>
    <property type="match status" value="2"/>
</dbReference>
<dbReference type="Pfam" id="PF04983">
    <property type="entry name" value="RNA_pol_Rpb1_3"/>
    <property type="match status" value="1"/>
</dbReference>
<dbReference type="Pfam" id="PF05000">
    <property type="entry name" value="RNA_pol_Rpb1_4"/>
    <property type="match status" value="1"/>
</dbReference>
<dbReference type="Pfam" id="PF04998">
    <property type="entry name" value="RNA_pol_Rpb1_5"/>
    <property type="match status" value="1"/>
</dbReference>
<dbReference type="SMART" id="SM00663">
    <property type="entry name" value="RPOLA_N"/>
    <property type="match status" value="1"/>
</dbReference>
<dbReference type="SUPFAM" id="SSF64484">
    <property type="entry name" value="beta and beta-prime subunits of DNA dependent RNA-polymerase"/>
    <property type="match status" value="1"/>
</dbReference>
<organism>
    <name type="scientific">Albidiferax ferrireducens (strain ATCC BAA-621 / DSM 15236 / T118)</name>
    <name type="common">Rhodoferax ferrireducens</name>
    <dbReference type="NCBI Taxonomy" id="338969"/>
    <lineage>
        <taxon>Bacteria</taxon>
        <taxon>Pseudomonadati</taxon>
        <taxon>Pseudomonadota</taxon>
        <taxon>Betaproteobacteria</taxon>
        <taxon>Burkholderiales</taxon>
        <taxon>Comamonadaceae</taxon>
        <taxon>Rhodoferax</taxon>
    </lineage>
</organism>
<feature type="chain" id="PRO_0000240817" description="DNA-directed RNA polymerase subunit beta'">
    <location>
        <begin position="1"/>
        <end position="1405"/>
    </location>
</feature>
<feature type="binding site" evidence="1">
    <location>
        <position position="70"/>
    </location>
    <ligand>
        <name>Zn(2+)</name>
        <dbReference type="ChEBI" id="CHEBI:29105"/>
        <label>1</label>
    </ligand>
</feature>
<feature type="binding site" evidence="1">
    <location>
        <position position="72"/>
    </location>
    <ligand>
        <name>Zn(2+)</name>
        <dbReference type="ChEBI" id="CHEBI:29105"/>
        <label>1</label>
    </ligand>
</feature>
<feature type="binding site" evidence="1">
    <location>
        <position position="85"/>
    </location>
    <ligand>
        <name>Zn(2+)</name>
        <dbReference type="ChEBI" id="CHEBI:29105"/>
        <label>1</label>
    </ligand>
</feature>
<feature type="binding site" evidence="1">
    <location>
        <position position="88"/>
    </location>
    <ligand>
        <name>Zn(2+)</name>
        <dbReference type="ChEBI" id="CHEBI:29105"/>
        <label>1</label>
    </ligand>
</feature>
<feature type="binding site" evidence="1">
    <location>
        <position position="458"/>
    </location>
    <ligand>
        <name>Mg(2+)</name>
        <dbReference type="ChEBI" id="CHEBI:18420"/>
    </ligand>
</feature>
<feature type="binding site" evidence="1">
    <location>
        <position position="460"/>
    </location>
    <ligand>
        <name>Mg(2+)</name>
        <dbReference type="ChEBI" id="CHEBI:18420"/>
    </ligand>
</feature>
<feature type="binding site" evidence="1">
    <location>
        <position position="462"/>
    </location>
    <ligand>
        <name>Mg(2+)</name>
        <dbReference type="ChEBI" id="CHEBI:18420"/>
    </ligand>
</feature>
<feature type="binding site" evidence="1">
    <location>
        <position position="813"/>
    </location>
    <ligand>
        <name>Zn(2+)</name>
        <dbReference type="ChEBI" id="CHEBI:29105"/>
        <label>2</label>
    </ligand>
</feature>
<feature type="binding site" evidence="1">
    <location>
        <position position="887"/>
    </location>
    <ligand>
        <name>Zn(2+)</name>
        <dbReference type="ChEBI" id="CHEBI:29105"/>
        <label>2</label>
    </ligand>
</feature>
<feature type="binding site" evidence="1">
    <location>
        <position position="894"/>
    </location>
    <ligand>
        <name>Zn(2+)</name>
        <dbReference type="ChEBI" id="CHEBI:29105"/>
        <label>2</label>
    </ligand>
</feature>
<feature type="binding site" evidence="1">
    <location>
        <position position="897"/>
    </location>
    <ligand>
        <name>Zn(2+)</name>
        <dbReference type="ChEBI" id="CHEBI:29105"/>
        <label>2</label>
    </ligand>
</feature>
<evidence type="ECO:0000255" key="1">
    <source>
        <dbReference type="HAMAP-Rule" id="MF_01322"/>
    </source>
</evidence>
<sequence>MKSLLDLFKQFTPDEHFNAIKIGMASPEKIRSWSFGEVKKPETINYRTFKPERDGLFCAKIFGPIKDYECLCGKYKRLKHRGVICEKCGVEVTQTKVRRERMGHIDLAAPCAHIWFLKSLPSRLGLVLDMTLRDIERVLYFEAYVVTDPGMTPLKKFSIMSEDDFDAKFKEYGDEFQAKMGAEGIKDLLQSLDIDGSIERLRNDPTGSELKIKKNTKRLKLLEAFKKSGIKPEWMVLEVLPVLPPDLRPLVPLDGGRFATSDLNDLYRRVINRNSRLRRLLELKAPEIIARNEKRMLQEAVDSLLDNGRRGKAMTGANKRALKSLADMIKGKSGRFRQNLLGKRVDYSGRSVIVVGPTLKLHQCGLPKLMALELFKPFIFARLEAMGIATTIKAAKKEVESGTPVVWDILEEVIKEHPVMLNRAPTLHRLGIQAFEPILIEGKAIQLHPLVCAAFNADFDGDQMAVHVPLSVEAQVECRTLMLASNNVLFPSNGEPSIVPSQDVVLGLYYTTRERINGKGEGLIFADVGEVQRAFDGGAVELNSRINVRLTEYIKDKQTGELVPSTKLWETTAGRALLSEILPKGLPFENVNKALKKKEISKLINVSFRKCGLKETVVFADKLLQYGFRLATKAGISICLDDMLVPTEKPGIIEQAEQEVKEIAQQYTSGLVTSGERYNKVVDIWGKAGDEVSKVMMAQLSKEIVTDRHGQQVQQESFNSIYMMADSGARGSPAQIRQVAGMRGLMAKPDGSIIETPITANFREGLNVLEYFISTHGARKGLADTALKTANSGYLTRRLVDVTQDLVVTEQDCGTHSGYLMRAIVEGGEVIESLRDRILGRTAADDVLHPENRSVLAPAGTMLDEDQIDELEVAGVDEVKVRTALTCETRFGICAKCYGRDLGRGGLVNGGEAVGVIAAQSIGEPGTQLTMRTFHIGGAASRAAIASSVEAKSNGNIGFNATMRYVTNGKKELVVISRSGEIVIHDEHGRERERHKVPYGAVLAVKADQTIKSGAILANWDPLTRPIITEFAGKAHFENVEEGLTVAKQVDEVTGLSTMVVIDPKHRGSAKVIRPIVKLIDASGNEVKIPGTDHSVTIGFPIGALVQVRDGQDVSPGEVLARIPIEGQKTRDITGGLPRVAELFEARSPKDKGVLAEMTGTVSFGKETKGKIRLQITDPDGAVWEDLVPKEKNIIVHEGQVVNKGESVVDGPADPQDILRLLGSEELARYIVDEVQDVYRLQGVKINDKHIEVIVRQMLRRVVVENAGDSTYINGEQVERSEILNTNDALRADGKIPARFTNLLLGITKASLSTDSFISAASFQETTRVLTEAAIMGKRDELRGLKENVIVGRLIPAGTGMAYHEARKVRENMDDTERRAIAEAEAAELAGQAEATEANEGAAAE</sequence>
<reference key="1">
    <citation type="submission" date="2006-02" db="EMBL/GenBank/DDBJ databases">
        <title>Complete sequence of chromosome of Rhodoferax ferrireducens DSM 15236.</title>
        <authorList>
            <person name="Copeland A."/>
            <person name="Lucas S."/>
            <person name="Lapidus A."/>
            <person name="Barry K."/>
            <person name="Detter J.C."/>
            <person name="Glavina del Rio T."/>
            <person name="Hammon N."/>
            <person name="Israni S."/>
            <person name="Pitluck S."/>
            <person name="Brettin T."/>
            <person name="Bruce D."/>
            <person name="Han C."/>
            <person name="Tapia R."/>
            <person name="Gilna P."/>
            <person name="Kiss H."/>
            <person name="Schmutz J."/>
            <person name="Larimer F."/>
            <person name="Land M."/>
            <person name="Kyrpides N."/>
            <person name="Ivanova N."/>
            <person name="Richardson P."/>
        </authorList>
    </citation>
    <scope>NUCLEOTIDE SEQUENCE [LARGE SCALE GENOMIC DNA]</scope>
    <source>
        <strain>ATCC BAA-621 / DSM 15236 / T118</strain>
    </source>
</reference>
<accession>Q21SF8</accession>
<gene>
    <name evidence="1" type="primary">rpoC</name>
    <name type="ordered locus">Rfer_3591</name>
</gene>
<protein>
    <recommendedName>
        <fullName evidence="1">DNA-directed RNA polymerase subunit beta'</fullName>
        <shortName evidence="1">RNAP subunit beta'</shortName>
        <ecNumber evidence="1">2.7.7.6</ecNumber>
    </recommendedName>
    <alternativeName>
        <fullName evidence="1">RNA polymerase subunit beta'</fullName>
    </alternativeName>
    <alternativeName>
        <fullName evidence="1">Transcriptase subunit beta'</fullName>
    </alternativeName>
</protein>
<name>RPOC_ALBFT</name>